<feature type="chain" id="PRO_0000443981" description="Monoogygenase CPUR_05431">
    <location>
        <begin position="1"/>
        <end position="507"/>
    </location>
</feature>
<reference key="1">
    <citation type="journal article" date="2013" name="PLoS Genet.">
        <title>Plant-symbiotic fungi as chemical engineers: Multi-genome analysis of the Clavicipitaceae reveals dynamics of alkaloid loci.</title>
        <authorList>
            <person name="Schardl C.L."/>
            <person name="Young C.A."/>
            <person name="Hesse U."/>
            <person name="Amyotte S.G."/>
            <person name="Andreeva K."/>
            <person name="Calie P.J."/>
            <person name="Fleetwood D.J."/>
            <person name="Haws D.C."/>
            <person name="Moore N."/>
            <person name="Oeser B."/>
            <person name="Panaccione D.G."/>
            <person name="Schweri K.K."/>
            <person name="Voisey C.R."/>
            <person name="Farman M.L."/>
            <person name="Jaromczyk J.W."/>
            <person name="Roe B.A."/>
            <person name="O'Sullivan D.M."/>
            <person name="Scott B."/>
            <person name="Tudzynski P."/>
            <person name="An Z."/>
            <person name="Arnaoudova E.G."/>
            <person name="Bullock C.T."/>
            <person name="Charlton N.D."/>
            <person name="Chen L."/>
            <person name="Cox M."/>
            <person name="Dinkins R.D."/>
            <person name="Florea S."/>
            <person name="Glenn A.E."/>
            <person name="Gordon A."/>
            <person name="Gueldener U."/>
            <person name="Harris D.R."/>
            <person name="Hollin W."/>
            <person name="Jaromczyk J."/>
            <person name="Johnson R.D."/>
            <person name="Khan A.K."/>
            <person name="Leistner E."/>
            <person name="Leuchtmann A."/>
            <person name="Li C."/>
            <person name="Liu J."/>
            <person name="Liu J."/>
            <person name="Liu M."/>
            <person name="Mace W."/>
            <person name="Machado C."/>
            <person name="Nagabhyru P."/>
            <person name="Pan J."/>
            <person name="Schmid J."/>
            <person name="Sugawara K."/>
            <person name="Steiner U."/>
            <person name="Takach J.E."/>
            <person name="Tanaka E."/>
            <person name="Webb J.S."/>
            <person name="Wilson E.V."/>
            <person name="Wiseman J.L."/>
            <person name="Yoshida R."/>
            <person name="Zeng Z."/>
        </authorList>
    </citation>
    <scope>NUCLEOTIDE SEQUENCE [LARGE SCALE GENOMIC DNA]</scope>
    <source>
        <strain>20.1</strain>
    </source>
</reference>
<reference key="2">
    <citation type="journal article" date="2016" name="Fungal Biol. Biotechnol.">
        <title>Identification and characterization of the ergochrome gene cluster in the plant pathogenic fungus Claviceps purpurea.</title>
        <authorList>
            <person name="Neubauer L."/>
            <person name="Dopstadt J."/>
            <person name="Humpf H.U."/>
            <person name="Tudzynski P."/>
        </authorList>
    </citation>
    <scope>FUNCTION</scope>
    <scope>INDUCTION</scope>
</reference>
<reference key="3">
    <citation type="journal article" date="2020" name="Org. Lett.">
        <title>Unraveling the fungal strategy for tetrahydroxanthone biosynthesis and diversification.</title>
        <authorList>
            <person name="Wei X."/>
            <person name="Matsuda Y."/>
        </authorList>
    </citation>
    <scope>FUNCTION</scope>
</reference>
<comment type="function">
    <text evidence="1 3 4 5">Monoogygenase; part of the ergochrome gene cluster responsible for the typical purple-black color of the ergot sclerotia (PubMed:28955461). The ergochrome gene cluster produces several ergot pigments including the yellow ergochrome secalonic acid and its derivatives, as well as the red anthraquinones endocrocin and clavorubin (PubMed:28955461). The pathway begins with the synthesis of atrochrysone thioester by the polyketide synthase (PKS) CPUR_05437 (By similarity). The atrochrysone carboxyl ACP thioesterase CPUR_05436 then breaks the thioester bond and releases the atrochrysone carboxylic acid from CPUR_05437 (By similarity). The atrochrysone carboxylic acid is then converted to atrochrysone which is further transformed into emodin anthrone (By similarity). The next step is performed by the anthrone oxygenase CPUR_05434 that catalyzes the oxidation of emodinanthrone to emodin (By similarity). Emodin is further modified to yield monodictyphenone via several steps involving CPUR_05427, CPUR_05428, CPUR_05429 and CPUR_05430 (By similarity). The short chain dehydrogenase/reductase CPUR_05418 then catalyzes the C-5 ketoreduction to give the xanthone skeleton of the monomeric units (PubMed:32105084). Ergochromes formation requires further dimerization steps of different xanthone units, probably catalyzed by the cytochrome P450 monooxygenase CPUR_05419 (PubMed:28955461). CPUR_05425, CPUR_05426 and CPUR_05431 are unique to Claviceps, thus it is likely that they are involved in further modification of xanthone units or in their dimerization (PubMed:28955461). The yellow ergochromes and the red anthraquinone pigments endocrocin and clavorubin are products from the same PKS derived precursors and the latter are likely shunt products in the pathway of xanthone biosynthesis (PubMed:28955461). It is proposed that atrochrysone carboxylic acid released from the PKS CPUR_05437 can also be converted to endocrocin anthrone which is further oxidized into endocrocin by CPUR_05435 (By similarity). Endocrocin could be then modified to clavorubin, possibly by CPUR_05423 and CPUR_05431 (PubMed:28955461). Clavorubin is the principal anthraquinone metabolite produced by the cluster with a much higher yield compared to endocrocin (PubMed:28955461).</text>
</comment>
<comment type="cofactor">
    <cofactor evidence="2">
        <name>FAD</name>
        <dbReference type="ChEBI" id="CHEBI:57692"/>
    </cofactor>
</comment>
<comment type="pathway">
    <text evidence="8">Pigment biosynthesis.</text>
</comment>
<comment type="induction">
    <text evidence="4">Expression correlates with the formation of the sclerotia and thus the pigment production (PubMed:28955461).</text>
</comment>
<comment type="similarity">
    <text evidence="7">Belongs to the PheA/TfdB FAD monooxygenase family.</text>
</comment>
<accession>M1WCF5</accession>
<gene>
    <name type="ORF">CPUR_05431</name>
</gene>
<protein>
    <recommendedName>
        <fullName evidence="6">Monoogygenase CPUR_05431</fullName>
        <ecNumber evidence="8">1.1.1.-</ecNumber>
    </recommendedName>
    <alternativeName>
        <fullName evidence="6">Ergochrome gene cluster protein CPUR_05431</fullName>
    </alternativeName>
</protein>
<organism>
    <name type="scientific">Claviceps purpurea (strain 20.1)</name>
    <name type="common">Ergot fungus</name>
    <name type="synonym">Sphacelia segetum</name>
    <dbReference type="NCBI Taxonomy" id="1111077"/>
    <lineage>
        <taxon>Eukaryota</taxon>
        <taxon>Fungi</taxon>
        <taxon>Dikarya</taxon>
        <taxon>Ascomycota</taxon>
        <taxon>Pezizomycotina</taxon>
        <taxon>Sordariomycetes</taxon>
        <taxon>Hypocreomycetidae</taxon>
        <taxon>Hypocreales</taxon>
        <taxon>Clavicipitaceae</taxon>
        <taxon>Claviceps</taxon>
    </lineage>
</organism>
<name>PIG9_CLAP2</name>
<proteinExistence type="evidence at transcript level"/>
<keyword id="KW-0274">FAD</keyword>
<keyword id="KW-0285">Flavoprotein</keyword>
<keyword id="KW-0503">Monooxygenase</keyword>
<keyword id="KW-0521">NADP</keyword>
<keyword id="KW-0560">Oxidoreductase</keyword>
<keyword id="KW-1185">Reference proteome</keyword>
<sequence>MANSSVYADVIVVGAGPVGLFVACELALHDVSVIVLERDADSDNVWKKGLLGGRGMYKPALEAFYRRGLLADLLYDEKRVTYLEKTSGFQYAGHFGGRLLNANAVDFSRFKYHLPGPTFLPAKTTIADIECELSKRATECGVRIVRGVEISRVEDEGDEVTVWADNQSFKSNWLVACDGGKSTIRKAAGFQFTGTDSELTCYIAVCDVDKPELLGKGMKPTDAGMYIVSGPRHLYVMDFDTTFDRSQTVTKEHLERVLQRVSGTSVKIEALELVSTFTDRCKQTTQYRKGRILLAGDSAHIHSPLGAQGLTTGIADAFNLGWKLASTVKGYASADLLDTYQRERQPEGAWTLDWSRSQVVIMRPDPAGKAISRLVTEYMATDDGTTFFVNKIWGISRRYDLVGAQAHPLVGCSVPDFQFEDGSYLGSKLHEGKFMTVDFSGSKLLEEATDLVQPWVGYLSCSVKDRLGMNALLLRPDGVVAWVAEDEVKVDSWKAALSQWIVLPGEA</sequence>
<dbReference type="EC" id="1.1.1.-" evidence="8"/>
<dbReference type="EMBL" id="CAGA01000032">
    <property type="protein sequence ID" value="CCE31578.1"/>
    <property type="molecule type" value="Genomic_DNA"/>
</dbReference>
<dbReference type="SMR" id="M1WCF5"/>
<dbReference type="STRING" id="1111077.M1WCF5"/>
<dbReference type="VEuPathDB" id="FungiDB:CPUR_05431"/>
<dbReference type="eggNOG" id="KOG3855">
    <property type="taxonomic scope" value="Eukaryota"/>
</dbReference>
<dbReference type="HOGENOM" id="CLU_009665_20_1_1"/>
<dbReference type="OrthoDB" id="1716816at2759"/>
<dbReference type="PhylomeDB" id="M1WCF5"/>
<dbReference type="Proteomes" id="UP000016801">
    <property type="component" value="Unassembled WGS sequence"/>
</dbReference>
<dbReference type="GO" id="GO:0071949">
    <property type="term" value="F:FAD binding"/>
    <property type="evidence" value="ECO:0007669"/>
    <property type="project" value="InterPro"/>
</dbReference>
<dbReference type="GO" id="GO:0016709">
    <property type="term" value="F:oxidoreductase activity, acting on paired donors, with incorporation or reduction of molecular oxygen, NAD(P)H as one donor, and incorporation of one atom of oxygen"/>
    <property type="evidence" value="ECO:0007669"/>
    <property type="project" value="UniProtKB-ARBA"/>
</dbReference>
<dbReference type="Gene3D" id="3.30.70.2450">
    <property type="match status" value="1"/>
</dbReference>
<dbReference type="Gene3D" id="3.40.30.120">
    <property type="match status" value="1"/>
</dbReference>
<dbReference type="Gene3D" id="3.50.50.60">
    <property type="entry name" value="FAD/NAD(P)-binding domain"/>
    <property type="match status" value="1"/>
</dbReference>
<dbReference type="InterPro" id="IPR002938">
    <property type="entry name" value="FAD-bd"/>
</dbReference>
<dbReference type="InterPro" id="IPR036188">
    <property type="entry name" value="FAD/NAD-bd_sf"/>
</dbReference>
<dbReference type="InterPro" id="IPR050641">
    <property type="entry name" value="RIFMO-like"/>
</dbReference>
<dbReference type="PANTHER" id="PTHR43004:SF19">
    <property type="entry name" value="BINDING MONOOXYGENASE, PUTATIVE (JCVI)-RELATED"/>
    <property type="match status" value="1"/>
</dbReference>
<dbReference type="PANTHER" id="PTHR43004">
    <property type="entry name" value="TRK SYSTEM POTASSIUM UPTAKE PROTEIN"/>
    <property type="match status" value="1"/>
</dbReference>
<dbReference type="Pfam" id="PF01494">
    <property type="entry name" value="FAD_binding_3"/>
    <property type="match status" value="1"/>
</dbReference>
<dbReference type="Pfam" id="PF21274">
    <property type="entry name" value="Rng_hyd_C"/>
    <property type="match status" value="1"/>
</dbReference>
<dbReference type="PRINTS" id="PR00420">
    <property type="entry name" value="RNGMNOXGNASE"/>
</dbReference>
<dbReference type="SUPFAM" id="SSF51905">
    <property type="entry name" value="FAD/NAD(P)-binding domain"/>
    <property type="match status" value="1"/>
</dbReference>
<evidence type="ECO:0000250" key="1">
    <source>
        <dbReference type="UniProtKB" id="Q4W944"/>
    </source>
</evidence>
<evidence type="ECO:0000250" key="2">
    <source>
        <dbReference type="UniProtKB" id="Q54530"/>
    </source>
</evidence>
<evidence type="ECO:0000250" key="3">
    <source>
        <dbReference type="UniProtKB" id="Q5BH30"/>
    </source>
</evidence>
<evidence type="ECO:0000269" key="4">
    <source>
    </source>
</evidence>
<evidence type="ECO:0000269" key="5">
    <source>
    </source>
</evidence>
<evidence type="ECO:0000303" key="6">
    <source>
    </source>
</evidence>
<evidence type="ECO:0000305" key="7"/>
<evidence type="ECO:0000305" key="8">
    <source>
    </source>
</evidence>